<reference key="1">
    <citation type="submission" date="2007-03" db="EMBL/GenBank/DDBJ databases">
        <title>Complete sequence of Shewanella loihica PV-4.</title>
        <authorList>
            <consortium name="US DOE Joint Genome Institute"/>
            <person name="Copeland A."/>
            <person name="Lucas S."/>
            <person name="Lapidus A."/>
            <person name="Barry K."/>
            <person name="Detter J.C."/>
            <person name="Glavina del Rio T."/>
            <person name="Hammon N."/>
            <person name="Israni S."/>
            <person name="Dalin E."/>
            <person name="Tice H."/>
            <person name="Pitluck S."/>
            <person name="Chain P."/>
            <person name="Malfatti S."/>
            <person name="Shin M."/>
            <person name="Vergez L."/>
            <person name="Schmutz J."/>
            <person name="Larimer F."/>
            <person name="Land M."/>
            <person name="Hauser L."/>
            <person name="Kyrpides N."/>
            <person name="Mikhailova N."/>
            <person name="Romine M.F."/>
            <person name="Serres G."/>
            <person name="Fredrickson J."/>
            <person name="Tiedje J."/>
            <person name="Richardson P."/>
        </authorList>
    </citation>
    <scope>NUCLEOTIDE SEQUENCE [LARGE SCALE GENOMIC DNA]</scope>
    <source>
        <strain>ATCC BAA-1088 / PV-4</strain>
    </source>
</reference>
<gene>
    <name evidence="1" type="primary">tolB</name>
    <name type="ordered locus">Shew_1527</name>
</gene>
<dbReference type="EMBL" id="CP000606">
    <property type="protein sequence ID" value="ABO23394.1"/>
    <property type="molecule type" value="Genomic_DNA"/>
</dbReference>
<dbReference type="RefSeq" id="WP_011865326.1">
    <property type="nucleotide sequence ID" value="NC_009092.1"/>
</dbReference>
<dbReference type="SMR" id="A3QD46"/>
<dbReference type="STRING" id="323850.Shew_1527"/>
<dbReference type="KEGG" id="slo:Shew_1527"/>
<dbReference type="eggNOG" id="COG0823">
    <property type="taxonomic scope" value="Bacteria"/>
</dbReference>
<dbReference type="HOGENOM" id="CLU_047123_0_0_6"/>
<dbReference type="OrthoDB" id="9802240at2"/>
<dbReference type="Proteomes" id="UP000001558">
    <property type="component" value="Chromosome"/>
</dbReference>
<dbReference type="GO" id="GO:0042597">
    <property type="term" value="C:periplasmic space"/>
    <property type="evidence" value="ECO:0007669"/>
    <property type="project" value="UniProtKB-SubCell"/>
</dbReference>
<dbReference type="GO" id="GO:0051301">
    <property type="term" value="P:cell division"/>
    <property type="evidence" value="ECO:0007669"/>
    <property type="project" value="UniProtKB-UniRule"/>
</dbReference>
<dbReference type="GO" id="GO:0017038">
    <property type="term" value="P:protein import"/>
    <property type="evidence" value="ECO:0007669"/>
    <property type="project" value="InterPro"/>
</dbReference>
<dbReference type="Gene3D" id="2.120.10.30">
    <property type="entry name" value="TolB, C-terminal domain"/>
    <property type="match status" value="1"/>
</dbReference>
<dbReference type="Gene3D" id="3.40.50.10070">
    <property type="entry name" value="TolB, N-terminal domain"/>
    <property type="match status" value="1"/>
</dbReference>
<dbReference type="HAMAP" id="MF_00671">
    <property type="entry name" value="TolB"/>
    <property type="match status" value="1"/>
</dbReference>
<dbReference type="InterPro" id="IPR011042">
    <property type="entry name" value="6-blade_b-propeller_TolB-like"/>
</dbReference>
<dbReference type="InterPro" id="IPR011659">
    <property type="entry name" value="PD40"/>
</dbReference>
<dbReference type="InterPro" id="IPR014167">
    <property type="entry name" value="Tol-Pal_TolB"/>
</dbReference>
<dbReference type="InterPro" id="IPR007195">
    <property type="entry name" value="TolB_N"/>
</dbReference>
<dbReference type="NCBIfam" id="TIGR02800">
    <property type="entry name" value="propeller_TolB"/>
    <property type="match status" value="1"/>
</dbReference>
<dbReference type="PANTHER" id="PTHR36842:SF1">
    <property type="entry name" value="PROTEIN TOLB"/>
    <property type="match status" value="1"/>
</dbReference>
<dbReference type="PANTHER" id="PTHR36842">
    <property type="entry name" value="PROTEIN TOLB HOMOLOG"/>
    <property type="match status" value="1"/>
</dbReference>
<dbReference type="Pfam" id="PF07676">
    <property type="entry name" value="PD40"/>
    <property type="match status" value="4"/>
</dbReference>
<dbReference type="Pfam" id="PF04052">
    <property type="entry name" value="TolB_N"/>
    <property type="match status" value="1"/>
</dbReference>
<dbReference type="SUPFAM" id="SSF52964">
    <property type="entry name" value="TolB, N-terminal domain"/>
    <property type="match status" value="1"/>
</dbReference>
<dbReference type="SUPFAM" id="SSF69304">
    <property type="entry name" value="Tricorn protease N-terminal domain"/>
    <property type="match status" value="1"/>
</dbReference>
<name>TOLB_SHELP</name>
<accession>A3QD46</accession>
<keyword id="KW-0131">Cell cycle</keyword>
<keyword id="KW-0132">Cell division</keyword>
<keyword id="KW-0574">Periplasm</keyword>
<keyword id="KW-1185">Reference proteome</keyword>
<keyword id="KW-0732">Signal</keyword>
<feature type="signal peptide" evidence="1">
    <location>
        <begin position="1"/>
        <end position="21"/>
    </location>
</feature>
<feature type="chain" id="PRO_5000229110" description="Tol-Pal system protein TolB" evidence="1">
    <location>
        <begin position="22"/>
        <end position="441"/>
    </location>
</feature>
<comment type="function">
    <text evidence="1">Part of the Tol-Pal system, which plays a role in outer membrane invagination during cell division and is important for maintaining outer membrane integrity.</text>
</comment>
<comment type="subunit">
    <text evidence="1">The Tol-Pal system is composed of five core proteins: the inner membrane proteins TolA, TolQ and TolR, the periplasmic protein TolB and the outer membrane protein Pal. They form a network linking the inner and outer membranes and the peptidoglycan layer.</text>
</comment>
<comment type="subcellular location">
    <subcellularLocation>
        <location evidence="1">Periplasm</location>
    </subcellularLocation>
</comment>
<comment type="similarity">
    <text evidence="1">Belongs to the TolB family.</text>
</comment>
<sequence length="441" mass="48597">MKNLGRWLILGLAFLTIPAKAALDIVITEGVDAARPIAVVPFVWQGSTPMPQQISDVVMSDLTRSGTFKPMDELGLPQRNLGSLAQMDLKAWSNVAAEAVVMGTVKPYGPDQYLVNFELIDLVKAQMQSGGPQSASEYLLDSRETVISSAQFRQYGHRISDIVYEKLTGIRGAFLTRIAYVVVDHKAKSPYKLMIADYDGYNEQMLLRSPEPLMSPAWSPDGRRLAYVSFENKQAEVFVQDIYTQQRTKVTSFPGINGAPTFSPDGKKLALTLSKDGQPEIYVADIATKAIKRVTNHYAIDTEASWTPDGKSLIFTSERGGRPQIYQVALASGKVTRLTFEGEWNLGGSISPDGRSMVFVNRTNGKFNIARMDLETRFMQVLTTTRLDESPSIAPNGTMVIYGTTYQGQQVLAAVSMDGRFKARLPVGQGEVKSPAWSPFL</sequence>
<protein>
    <recommendedName>
        <fullName evidence="1">Tol-Pal system protein TolB</fullName>
    </recommendedName>
</protein>
<evidence type="ECO:0000255" key="1">
    <source>
        <dbReference type="HAMAP-Rule" id="MF_00671"/>
    </source>
</evidence>
<organism>
    <name type="scientific">Shewanella loihica (strain ATCC BAA-1088 / PV-4)</name>
    <dbReference type="NCBI Taxonomy" id="323850"/>
    <lineage>
        <taxon>Bacteria</taxon>
        <taxon>Pseudomonadati</taxon>
        <taxon>Pseudomonadota</taxon>
        <taxon>Gammaproteobacteria</taxon>
        <taxon>Alteromonadales</taxon>
        <taxon>Shewanellaceae</taxon>
        <taxon>Shewanella</taxon>
    </lineage>
</organism>
<proteinExistence type="inferred from homology"/>